<name>PROB_KLEP3</name>
<accession>B5Y168</accession>
<organism>
    <name type="scientific">Klebsiella pneumoniae (strain 342)</name>
    <dbReference type="NCBI Taxonomy" id="507522"/>
    <lineage>
        <taxon>Bacteria</taxon>
        <taxon>Pseudomonadati</taxon>
        <taxon>Pseudomonadota</taxon>
        <taxon>Gammaproteobacteria</taxon>
        <taxon>Enterobacterales</taxon>
        <taxon>Enterobacteriaceae</taxon>
        <taxon>Klebsiella/Raoultella group</taxon>
        <taxon>Klebsiella</taxon>
        <taxon>Klebsiella pneumoniae complex</taxon>
    </lineage>
</organism>
<proteinExistence type="inferred from homology"/>
<dbReference type="EC" id="2.7.2.11" evidence="1"/>
<dbReference type="EMBL" id="CP000964">
    <property type="protein sequence ID" value="ACI06566.1"/>
    <property type="molecule type" value="Genomic_DNA"/>
</dbReference>
<dbReference type="SMR" id="B5Y168"/>
<dbReference type="KEGG" id="kpe:KPK_4409"/>
<dbReference type="HOGENOM" id="CLU_025400_2_0_6"/>
<dbReference type="UniPathway" id="UPA00098">
    <property type="reaction ID" value="UER00359"/>
</dbReference>
<dbReference type="Proteomes" id="UP000001734">
    <property type="component" value="Chromosome"/>
</dbReference>
<dbReference type="GO" id="GO:0005829">
    <property type="term" value="C:cytosol"/>
    <property type="evidence" value="ECO:0007669"/>
    <property type="project" value="TreeGrafter"/>
</dbReference>
<dbReference type="GO" id="GO:0005524">
    <property type="term" value="F:ATP binding"/>
    <property type="evidence" value="ECO:0007669"/>
    <property type="project" value="UniProtKB-KW"/>
</dbReference>
<dbReference type="GO" id="GO:0004349">
    <property type="term" value="F:glutamate 5-kinase activity"/>
    <property type="evidence" value="ECO:0007669"/>
    <property type="project" value="UniProtKB-UniRule"/>
</dbReference>
<dbReference type="GO" id="GO:0003723">
    <property type="term" value="F:RNA binding"/>
    <property type="evidence" value="ECO:0007669"/>
    <property type="project" value="InterPro"/>
</dbReference>
<dbReference type="GO" id="GO:0055129">
    <property type="term" value="P:L-proline biosynthetic process"/>
    <property type="evidence" value="ECO:0007669"/>
    <property type="project" value="UniProtKB-UniRule"/>
</dbReference>
<dbReference type="CDD" id="cd04242">
    <property type="entry name" value="AAK_G5K_ProB"/>
    <property type="match status" value="1"/>
</dbReference>
<dbReference type="CDD" id="cd21157">
    <property type="entry name" value="PUA_G5K"/>
    <property type="match status" value="1"/>
</dbReference>
<dbReference type="FunFam" id="2.30.130.10:FF:000003">
    <property type="entry name" value="Glutamate 5-kinase"/>
    <property type="match status" value="1"/>
</dbReference>
<dbReference type="FunFam" id="3.40.1160.10:FF:000006">
    <property type="entry name" value="Glutamate 5-kinase"/>
    <property type="match status" value="1"/>
</dbReference>
<dbReference type="Gene3D" id="3.40.1160.10">
    <property type="entry name" value="Acetylglutamate kinase-like"/>
    <property type="match status" value="2"/>
</dbReference>
<dbReference type="Gene3D" id="2.30.130.10">
    <property type="entry name" value="PUA domain"/>
    <property type="match status" value="1"/>
</dbReference>
<dbReference type="HAMAP" id="MF_00456">
    <property type="entry name" value="ProB"/>
    <property type="match status" value="1"/>
</dbReference>
<dbReference type="InterPro" id="IPR036393">
    <property type="entry name" value="AceGlu_kinase-like_sf"/>
</dbReference>
<dbReference type="InterPro" id="IPR001048">
    <property type="entry name" value="Asp/Glu/Uridylate_kinase"/>
</dbReference>
<dbReference type="InterPro" id="IPR041739">
    <property type="entry name" value="G5K_ProB"/>
</dbReference>
<dbReference type="InterPro" id="IPR001057">
    <property type="entry name" value="Glu/AcGlu_kinase"/>
</dbReference>
<dbReference type="InterPro" id="IPR011529">
    <property type="entry name" value="Glu_5kinase"/>
</dbReference>
<dbReference type="InterPro" id="IPR005715">
    <property type="entry name" value="Glu_5kinase/COase_Synthase"/>
</dbReference>
<dbReference type="InterPro" id="IPR019797">
    <property type="entry name" value="Glutamate_5-kinase_CS"/>
</dbReference>
<dbReference type="InterPro" id="IPR002478">
    <property type="entry name" value="PUA"/>
</dbReference>
<dbReference type="InterPro" id="IPR015947">
    <property type="entry name" value="PUA-like_sf"/>
</dbReference>
<dbReference type="InterPro" id="IPR036974">
    <property type="entry name" value="PUA_sf"/>
</dbReference>
<dbReference type="NCBIfam" id="TIGR01027">
    <property type="entry name" value="proB"/>
    <property type="match status" value="1"/>
</dbReference>
<dbReference type="PANTHER" id="PTHR43654">
    <property type="entry name" value="GLUTAMATE 5-KINASE"/>
    <property type="match status" value="1"/>
</dbReference>
<dbReference type="PANTHER" id="PTHR43654:SF1">
    <property type="entry name" value="ISOPENTENYL PHOSPHATE KINASE"/>
    <property type="match status" value="1"/>
</dbReference>
<dbReference type="Pfam" id="PF00696">
    <property type="entry name" value="AA_kinase"/>
    <property type="match status" value="1"/>
</dbReference>
<dbReference type="Pfam" id="PF01472">
    <property type="entry name" value="PUA"/>
    <property type="match status" value="1"/>
</dbReference>
<dbReference type="PIRSF" id="PIRSF000729">
    <property type="entry name" value="GK"/>
    <property type="match status" value="1"/>
</dbReference>
<dbReference type="PRINTS" id="PR00474">
    <property type="entry name" value="GLU5KINASE"/>
</dbReference>
<dbReference type="SMART" id="SM00359">
    <property type="entry name" value="PUA"/>
    <property type="match status" value="1"/>
</dbReference>
<dbReference type="SUPFAM" id="SSF53633">
    <property type="entry name" value="Carbamate kinase-like"/>
    <property type="match status" value="1"/>
</dbReference>
<dbReference type="SUPFAM" id="SSF88697">
    <property type="entry name" value="PUA domain-like"/>
    <property type="match status" value="1"/>
</dbReference>
<dbReference type="PROSITE" id="PS00902">
    <property type="entry name" value="GLUTAMATE_5_KINASE"/>
    <property type="match status" value="1"/>
</dbReference>
<dbReference type="PROSITE" id="PS50890">
    <property type="entry name" value="PUA"/>
    <property type="match status" value="1"/>
</dbReference>
<evidence type="ECO:0000255" key="1">
    <source>
        <dbReference type="HAMAP-Rule" id="MF_00456"/>
    </source>
</evidence>
<keyword id="KW-0028">Amino-acid biosynthesis</keyword>
<keyword id="KW-0067">ATP-binding</keyword>
<keyword id="KW-0963">Cytoplasm</keyword>
<keyword id="KW-0418">Kinase</keyword>
<keyword id="KW-0547">Nucleotide-binding</keyword>
<keyword id="KW-0641">Proline biosynthesis</keyword>
<keyword id="KW-0808">Transferase</keyword>
<gene>
    <name evidence="1" type="primary">proB</name>
    <name type="ordered locus">KPK_4409</name>
</gene>
<protein>
    <recommendedName>
        <fullName evidence="1">Glutamate 5-kinase</fullName>
        <ecNumber evidence="1">2.7.2.11</ecNumber>
    </recommendedName>
    <alternativeName>
        <fullName evidence="1">Gamma-glutamyl kinase</fullName>
        <shortName evidence="1">GK</shortName>
    </alternativeName>
</protein>
<feature type="chain" id="PRO_1000125241" description="Glutamate 5-kinase">
    <location>
        <begin position="1"/>
        <end position="367"/>
    </location>
</feature>
<feature type="domain" description="PUA" evidence="1">
    <location>
        <begin position="275"/>
        <end position="353"/>
    </location>
</feature>
<feature type="binding site" evidence="1">
    <location>
        <position position="10"/>
    </location>
    <ligand>
        <name>ATP</name>
        <dbReference type="ChEBI" id="CHEBI:30616"/>
    </ligand>
</feature>
<feature type="binding site" evidence="1">
    <location>
        <position position="50"/>
    </location>
    <ligand>
        <name>substrate</name>
    </ligand>
</feature>
<feature type="binding site" evidence="1">
    <location>
        <position position="137"/>
    </location>
    <ligand>
        <name>substrate</name>
    </ligand>
</feature>
<feature type="binding site" evidence="1">
    <location>
        <position position="149"/>
    </location>
    <ligand>
        <name>substrate</name>
    </ligand>
</feature>
<feature type="binding site" evidence="1">
    <location>
        <begin position="169"/>
        <end position="170"/>
    </location>
    <ligand>
        <name>ATP</name>
        <dbReference type="ChEBI" id="CHEBI:30616"/>
    </ligand>
</feature>
<feature type="binding site" evidence="1">
    <location>
        <begin position="211"/>
        <end position="217"/>
    </location>
    <ligand>
        <name>ATP</name>
        <dbReference type="ChEBI" id="CHEBI:30616"/>
    </ligand>
</feature>
<sequence length="367" mass="39175">MSESQTLVVKLGTSVLTGGSRRLNRAHIVELVRQCAQLHAMGHRIVIVTSGAIAAGREHLGYPELPATIASKQLLAAVGQSRLIQLWEQLFSIYGIHVGQMLLTRADMEDRERFLNARDTLRALLDNSIVPVINENDAVATAEIKVGDNDNLSALAAILAGADKLLLLTDQPGLFTADPRSNPQAELIKDVYGIDDALRAIAGDSVSGLGTGGMGTKLQAADVACRAGIDTIIAAGNRPDVIGHAMEGLPVGTCFHAQESPLENRKRWIFGAPPAGELTVDAGATQAILERGSSLLPKGIKIVSGNFSRGEVIRIRNSEGRDIAHGVSRYNSDALRLIAGQHSQQIDAILGYEYGPVAVHRDDMIIR</sequence>
<comment type="function">
    <text evidence="1">Catalyzes the transfer of a phosphate group to glutamate to form L-glutamate 5-phosphate.</text>
</comment>
<comment type="catalytic activity">
    <reaction evidence="1">
        <text>L-glutamate + ATP = L-glutamyl 5-phosphate + ADP</text>
        <dbReference type="Rhea" id="RHEA:14877"/>
        <dbReference type="ChEBI" id="CHEBI:29985"/>
        <dbReference type="ChEBI" id="CHEBI:30616"/>
        <dbReference type="ChEBI" id="CHEBI:58274"/>
        <dbReference type="ChEBI" id="CHEBI:456216"/>
        <dbReference type="EC" id="2.7.2.11"/>
    </reaction>
</comment>
<comment type="pathway">
    <text evidence="1">Amino-acid biosynthesis; L-proline biosynthesis; L-glutamate 5-semialdehyde from L-glutamate: step 1/2.</text>
</comment>
<comment type="subcellular location">
    <subcellularLocation>
        <location evidence="1">Cytoplasm</location>
    </subcellularLocation>
</comment>
<comment type="similarity">
    <text evidence="1">Belongs to the glutamate 5-kinase family.</text>
</comment>
<reference key="1">
    <citation type="journal article" date="2008" name="PLoS Genet.">
        <title>Complete genome sequence of the N2-fixing broad host range endophyte Klebsiella pneumoniae 342 and virulence predictions verified in mice.</title>
        <authorList>
            <person name="Fouts D.E."/>
            <person name="Tyler H.L."/>
            <person name="DeBoy R.T."/>
            <person name="Daugherty S."/>
            <person name="Ren Q."/>
            <person name="Badger J.H."/>
            <person name="Durkin A.S."/>
            <person name="Huot H."/>
            <person name="Shrivastava S."/>
            <person name="Kothari S."/>
            <person name="Dodson R.J."/>
            <person name="Mohamoud Y."/>
            <person name="Khouri H."/>
            <person name="Roesch L.F.W."/>
            <person name="Krogfelt K.A."/>
            <person name="Struve C."/>
            <person name="Triplett E.W."/>
            <person name="Methe B.A."/>
        </authorList>
    </citation>
    <scope>NUCLEOTIDE SEQUENCE [LARGE SCALE GENOMIC DNA]</scope>
    <source>
        <strain>342</strain>
    </source>
</reference>